<keyword id="KW-0378">Hydrolase</keyword>
<keyword id="KW-0460">Magnesium</keyword>
<keyword id="KW-0511">Multifunctional enzyme</keyword>
<keyword id="KW-0548">Nucleotidyltransferase</keyword>
<keyword id="KW-1185">Reference proteome</keyword>
<keyword id="KW-0808">Transferase</keyword>
<accession>Q9X706</accession>
<gene>
    <name type="primary">glnD</name>
    <name type="ordered locus">Cgl2059</name>
    <name type="ordered locus">cg2258</name>
</gene>
<comment type="function">
    <text evidence="1">Modifies, by uridylylation and deuridylylation, the PII regulatory proteins (GlnB and homologs), in response to the nitrogen status of the cell that GlnD senses through the glutamine level. Under low glutamine levels, catalyzes the conversion of the PII proteins and UTP to PII-UMP and PPi, while under higher glutamine levels, GlnD hydrolyzes PII-UMP to PII and UMP (deuridylylation). Thus, controls uridylylation state and activity of the PII proteins, and plays an important role in the regulation of nitrogen assimilation and metabolism (By similarity).</text>
</comment>
<comment type="catalytic activity">
    <reaction>
        <text>[protein-PII]-L-tyrosine + UTP = [protein-PII]-uridylyl-L-tyrosine + diphosphate</text>
        <dbReference type="Rhea" id="RHEA:13673"/>
        <dbReference type="Rhea" id="RHEA-COMP:12147"/>
        <dbReference type="Rhea" id="RHEA-COMP:12148"/>
        <dbReference type="ChEBI" id="CHEBI:33019"/>
        <dbReference type="ChEBI" id="CHEBI:46398"/>
        <dbReference type="ChEBI" id="CHEBI:46858"/>
        <dbReference type="ChEBI" id="CHEBI:90602"/>
        <dbReference type="EC" id="2.7.7.59"/>
    </reaction>
</comment>
<comment type="catalytic activity">
    <reaction>
        <text>[protein-PII]-uridylyl-L-tyrosine + H2O = [protein-PII]-L-tyrosine + UMP + H(+)</text>
        <dbReference type="Rhea" id="RHEA:48600"/>
        <dbReference type="Rhea" id="RHEA-COMP:12147"/>
        <dbReference type="Rhea" id="RHEA-COMP:12148"/>
        <dbReference type="ChEBI" id="CHEBI:15377"/>
        <dbReference type="ChEBI" id="CHEBI:15378"/>
        <dbReference type="ChEBI" id="CHEBI:46858"/>
        <dbReference type="ChEBI" id="CHEBI:57865"/>
        <dbReference type="ChEBI" id="CHEBI:90602"/>
    </reaction>
</comment>
<comment type="cofactor">
    <cofactor evidence="1">
        <name>Mg(2+)</name>
        <dbReference type="ChEBI" id="CHEBI:18420"/>
    </cofactor>
</comment>
<comment type="activity regulation">
    <text evidence="1">Uridylyltransferase (UTase) activity is inhibited by glutamine, while glutamine activates uridylyl-removing (UR) activity.</text>
</comment>
<comment type="domain">
    <text evidence="1">Has two distinct domains: an N-terminal nucleotidyltransferase (NT) domain responsible for UTase activity, and a HD domain that encodes UR activity (By similarity). Lacks the two C-terminal ACT domains found in GlnD orthologs, that seem to have a role in glutamine sensing.</text>
</comment>
<comment type="similarity">
    <text evidence="3">Belongs to the GlnD family.</text>
</comment>
<organism>
    <name type="scientific">Corynebacterium glutamicum (strain ATCC 13032 / DSM 20300 / JCM 1318 / BCRC 11384 / CCUG 27702 / LMG 3730 / NBRC 12168 / NCIMB 10025 / NRRL B-2784 / 534)</name>
    <dbReference type="NCBI Taxonomy" id="196627"/>
    <lineage>
        <taxon>Bacteria</taxon>
        <taxon>Bacillati</taxon>
        <taxon>Actinomycetota</taxon>
        <taxon>Actinomycetes</taxon>
        <taxon>Mycobacteriales</taxon>
        <taxon>Corynebacteriaceae</taxon>
        <taxon>Corynebacterium</taxon>
    </lineage>
</organism>
<name>GLND_CORGL</name>
<sequence>MNNPAQLRQDTEKEVLALLGSLVLPAGTALAATGSLARSELTPYSDLDLILIHPPGATPDGVEDLWYPIWDAKKRLDYSVRTPDECVAMISADSTAALAMLDLRFVAGDEDLCAKTRRRIVEKWRQELNKNFDAVVDTAIARWRRSGPVVAMTRPDLKHGRGGLRDFELIKALALGHLCNLPQLDAQHQLLLDARTLLHVHARRSRDVLDPEFAVDVAMDLGFVDRYHLGREIADAARAIDDGLTTALATARGILPRRTGFAFRNASRRPLDLDVVDANGTIELSKKPDLNDPALPLRVAAAAATTGLPVAESTWVRLNECPPLPEPWPANAAGDFFRILSSPKNSRRVVKNMDRHGLWSRFVPEWDRIKGLMPREPSHISTIDEHSLNTVAGCALETVTVARPDLLVLGALYHDIGKGFPRPHEQVGAEMVARAASRMGLNLRDRASVQTLVAEHTAVAKIAARLDPSSEGAVDKLLDAVRYDLVTLNLLEVLTEADAKATGPGVWTARLEHALRIVCKRARDRLTDIRPVAPMIAPRSEIGLVERDGVFTVQWHGEDLHRILGVIYAKGWTITAARMLANGQWSAEFDVRANGPQDFDPQHFLQAYQSGVFSEVPIPALGITATFWHGNTLEVRTELRTGAIFALLRTLPDALWINAVTRGATLIIQAALKPGFDRATVERSVVRSLAGS</sequence>
<protein>
    <recommendedName>
        <fullName>Bifunctional uridylyltransferase/uridylyl-removing enzyme</fullName>
        <shortName>UTase/UR</shortName>
    </recommendedName>
    <alternativeName>
        <fullName>Bifunctional [protein-PII] modification enzyme</fullName>
    </alternativeName>
    <alternativeName>
        <fullName>Bifunctional nitrogen sensor protein</fullName>
    </alternativeName>
    <domain>
        <recommendedName>
            <fullName>[Protein-PII] uridylyltransferase</fullName>
            <shortName>PII uridylyltransferase</shortName>
            <shortName>UTase</shortName>
            <ecNumber>2.7.7.59</ecNumber>
        </recommendedName>
    </domain>
    <domain>
        <recommendedName>
            <fullName>[Protein-PII]-UMP uridylyl-removing enzyme</fullName>
            <shortName>UR</shortName>
            <ecNumber>3.1.4.-</ecNumber>
        </recommendedName>
    </domain>
</protein>
<proteinExistence type="inferred from homology"/>
<reference key="1">
    <citation type="journal article" date="1999" name="FEMS Microbiol. Lett.">
        <title>Nitrogen regulation in Corynebacterium glutamicum: isolation of genes involved and biochemical characterization of corresponding proteins.</title>
        <authorList>
            <person name="Jakoby M.J."/>
            <person name="Kraemer R."/>
            <person name="Burkovski A."/>
        </authorList>
    </citation>
    <scope>NUCLEOTIDE SEQUENCE [GENOMIC DNA]</scope>
    <source>
        <strain>ATCC 13032 / DSM 20300 / JCM 1318 / BCRC 11384 / CCUG 27702 / LMG 3730 / NBRC 12168 / NCIMB 10025 / NRRL B-2784 / 534</strain>
    </source>
</reference>
<reference key="2">
    <citation type="journal article" date="2003" name="Appl. Microbiol. Biotechnol.">
        <title>The Corynebacterium glutamicum genome: features and impacts on biotechnological processes.</title>
        <authorList>
            <person name="Ikeda M."/>
            <person name="Nakagawa S."/>
        </authorList>
    </citation>
    <scope>NUCLEOTIDE SEQUENCE [LARGE SCALE GENOMIC DNA]</scope>
    <source>
        <strain>ATCC 13032 / DSM 20300 / JCM 1318 / BCRC 11384 / CCUG 27702 / LMG 3730 / NBRC 12168 / NCIMB 10025 / NRRL B-2784 / 534</strain>
    </source>
</reference>
<reference key="3">
    <citation type="journal article" date="2003" name="J. Biotechnol.">
        <title>The complete Corynebacterium glutamicum ATCC 13032 genome sequence and its impact on the production of L-aspartate-derived amino acids and vitamins.</title>
        <authorList>
            <person name="Kalinowski J."/>
            <person name="Bathe B."/>
            <person name="Bartels D."/>
            <person name="Bischoff N."/>
            <person name="Bott M."/>
            <person name="Burkovski A."/>
            <person name="Dusch N."/>
            <person name="Eggeling L."/>
            <person name="Eikmanns B.J."/>
            <person name="Gaigalat L."/>
            <person name="Goesmann A."/>
            <person name="Hartmann M."/>
            <person name="Huthmacher K."/>
            <person name="Kraemer R."/>
            <person name="Linke B."/>
            <person name="McHardy A.C."/>
            <person name="Meyer F."/>
            <person name="Moeckel B."/>
            <person name="Pfefferle W."/>
            <person name="Puehler A."/>
            <person name="Rey D.A."/>
            <person name="Rueckert C."/>
            <person name="Rupp O."/>
            <person name="Sahm H."/>
            <person name="Wendisch V.F."/>
            <person name="Wiegraebe I."/>
            <person name="Tauch A."/>
        </authorList>
    </citation>
    <scope>NUCLEOTIDE SEQUENCE [LARGE SCALE GENOMIC DNA]</scope>
    <source>
        <strain>ATCC 13032 / DSM 20300 / JCM 1318 / BCRC 11384 / CCUG 27702 / LMG 3730 / NBRC 12168 / NCIMB 10025 / NRRL B-2784 / 534</strain>
    </source>
</reference>
<feature type="chain" id="PRO_0000192730" description="Bifunctional uridylyltransferase/uridylyl-removing enzyme">
    <location>
        <begin position="1"/>
        <end position="692"/>
    </location>
</feature>
<feature type="domain" description="HD" evidence="2">
    <location>
        <begin position="383"/>
        <end position="484"/>
    </location>
</feature>
<feature type="region of interest" description="Uridylyltransferase">
    <location>
        <begin position="1"/>
        <end position="270"/>
    </location>
</feature>
<feature type="region of interest" description="Uridylyl-removing">
    <location>
        <begin position="271"/>
        <end position="692"/>
    </location>
</feature>
<dbReference type="EC" id="2.7.7.59"/>
<dbReference type="EC" id="3.1.4.-"/>
<dbReference type="EMBL" id="AJ010319">
    <property type="protein sequence ID" value="CAB39374.1"/>
    <property type="molecule type" value="Genomic_DNA"/>
</dbReference>
<dbReference type="EMBL" id="BA000036">
    <property type="protein sequence ID" value="BAB99452.1"/>
    <property type="molecule type" value="Genomic_DNA"/>
</dbReference>
<dbReference type="EMBL" id="BX927154">
    <property type="protein sequence ID" value="CAF20397.1"/>
    <property type="molecule type" value="Genomic_DNA"/>
</dbReference>
<dbReference type="RefSeq" id="NP_601262.1">
    <property type="nucleotide sequence ID" value="NC_003450.3"/>
</dbReference>
<dbReference type="RefSeq" id="WP_011014852.1">
    <property type="nucleotide sequence ID" value="NC_006958.1"/>
</dbReference>
<dbReference type="SMR" id="Q9X706"/>
<dbReference type="STRING" id="196627.cg2258"/>
<dbReference type="KEGG" id="cgb:cg2258"/>
<dbReference type="KEGG" id="cgl:Cgl2059"/>
<dbReference type="PATRIC" id="fig|196627.13.peg.1997"/>
<dbReference type="eggNOG" id="COG2844">
    <property type="taxonomic scope" value="Bacteria"/>
</dbReference>
<dbReference type="HOGENOM" id="CLU_012833_2_0_11"/>
<dbReference type="OrthoDB" id="9758038at2"/>
<dbReference type="BioCyc" id="CORYNE:G18NG-11651-MONOMER"/>
<dbReference type="BRENDA" id="2.7.7.59">
    <property type="organism ID" value="960"/>
</dbReference>
<dbReference type="Proteomes" id="UP000000582">
    <property type="component" value="Chromosome"/>
</dbReference>
<dbReference type="Proteomes" id="UP000001009">
    <property type="component" value="Chromosome"/>
</dbReference>
<dbReference type="GO" id="GO:0008773">
    <property type="term" value="F:[protein-PII] uridylyltransferase activity"/>
    <property type="evidence" value="ECO:0007669"/>
    <property type="project" value="UniProtKB-EC"/>
</dbReference>
<dbReference type="GO" id="GO:0016787">
    <property type="term" value="F:hydrolase activity"/>
    <property type="evidence" value="ECO:0007669"/>
    <property type="project" value="UniProtKB-KW"/>
</dbReference>
<dbReference type="CDD" id="cd00077">
    <property type="entry name" value="HDc"/>
    <property type="match status" value="1"/>
</dbReference>
<dbReference type="CDD" id="cd05401">
    <property type="entry name" value="NT_GlnE_GlnD_like"/>
    <property type="match status" value="1"/>
</dbReference>
<dbReference type="Gene3D" id="1.10.3090.10">
    <property type="entry name" value="cca-adding enzyme, domain 2"/>
    <property type="match status" value="1"/>
</dbReference>
<dbReference type="InterPro" id="IPR003607">
    <property type="entry name" value="HD/PDEase_dom"/>
</dbReference>
<dbReference type="InterPro" id="IPR006674">
    <property type="entry name" value="HD_domain"/>
</dbReference>
<dbReference type="InterPro" id="IPR043519">
    <property type="entry name" value="NT_sf"/>
</dbReference>
<dbReference type="InterPro" id="IPR002934">
    <property type="entry name" value="Polymerase_NTP_transf_dom"/>
</dbReference>
<dbReference type="InterPro" id="IPR010043">
    <property type="entry name" value="UTase/UR"/>
</dbReference>
<dbReference type="NCBIfam" id="NF001265">
    <property type="entry name" value="PRK00227.1"/>
    <property type="match status" value="1"/>
</dbReference>
<dbReference type="PANTHER" id="PTHR47320">
    <property type="entry name" value="BIFUNCTIONAL URIDYLYLTRANSFERASE/URIDYLYL-REMOVING ENZYME"/>
    <property type="match status" value="1"/>
</dbReference>
<dbReference type="PANTHER" id="PTHR47320:SF1">
    <property type="entry name" value="BIFUNCTIONAL URIDYLYLTRANSFERASE_URIDYLYL-REMOVING ENZYME"/>
    <property type="match status" value="1"/>
</dbReference>
<dbReference type="Pfam" id="PF01966">
    <property type="entry name" value="HD"/>
    <property type="match status" value="1"/>
</dbReference>
<dbReference type="Pfam" id="PF01909">
    <property type="entry name" value="NTP_transf_2"/>
    <property type="match status" value="1"/>
</dbReference>
<dbReference type="SMART" id="SM00471">
    <property type="entry name" value="HDc"/>
    <property type="match status" value="1"/>
</dbReference>
<dbReference type="SUPFAM" id="SSF109604">
    <property type="entry name" value="HD-domain/PDEase-like"/>
    <property type="match status" value="1"/>
</dbReference>
<dbReference type="SUPFAM" id="SSF81301">
    <property type="entry name" value="Nucleotidyltransferase"/>
    <property type="match status" value="1"/>
</dbReference>
<dbReference type="PROSITE" id="PS51831">
    <property type="entry name" value="HD"/>
    <property type="match status" value="1"/>
</dbReference>
<evidence type="ECO:0000250" key="1"/>
<evidence type="ECO:0000255" key="2">
    <source>
        <dbReference type="PROSITE-ProRule" id="PRU01175"/>
    </source>
</evidence>
<evidence type="ECO:0000305" key="3"/>